<sequence length="842" mass="94882">MDIRKAYLDFFASKGHEITPSSPLVPDDATLLFTNAGMVPFKSIFTGEIPRPNPPRKTSCQTCIRAGGKHNDLDNVGYTARHHTFFEMLGNFSFGDYFKEQAIAYAWEFVTEFLKLPKDRLYVTVHENDDEAFNLWQKHIQKERIYKFGDKDNFWQMGDTGPCGPCSEIFYDQGEEHFNSSEDYMGGDGDRFLEIWNLVFMQYERSADGVLSPLPKPSIDTGMGLERVTAIKEGKFSNFDSSLFMPIINEISKLCNKTYIYESGASFRVIADHIRSSVFLLAQGVSFDKEGRGYVLRRILRRALRHGYLLGFKQAFMYKLVDVVCDLMGGHYTYLNEKKDFIKEQIRLEEERFLSTIENGIEIFNEELKNTKEIFSGEVAFKLYDTYGFPLDLTADMLREKNLKVDEEKFELLMNEQKARAKASWKGSGDKTASGDFKNLLEKFGENHFVGYEKAECESKILALLDEDFKEVSTLKDAGWVMLKNTPFYATSGGQSADSGFMAKREVLDTQKFFNLNLSFVKAGEELKVGDIVHARIDTEKREQIARHHSATHLLHHALREILGSHVSQAGSLVESNKLRFDFTHHKALSKEELENIEKRVNEMIINSSEAILENMPLEEAKKSGAIALFNEKYQGNVRVLTLGESKELCGGTHVKNTAQIGSFYIVKESGVSAGVRRIEAVVSKAALEFVKNQLEELSKVKDELKNNDILSGIKKLKNEILSLKNELKNSSKTELDSKNIQGVEICVKRIDNGDIKAMIDDFKNKFAKAVILLIQVKDEKITLAAGVKDVPLKAGALVKEAAQILGGNGGGRDDFATAGGKDLSKINEALKQSLETIEKAL</sequence>
<comment type="function">
    <text evidence="1">Catalyzes the attachment of alanine to tRNA(Ala) in a two-step reaction: alanine is first activated by ATP to form Ala-AMP and then transferred to the acceptor end of tRNA(Ala). Also edits incorrectly charged Ser-tRNA(Ala) and Gly-tRNA(Ala) via its editing domain.</text>
</comment>
<comment type="catalytic activity">
    <reaction evidence="1">
        <text>tRNA(Ala) + L-alanine + ATP = L-alanyl-tRNA(Ala) + AMP + diphosphate</text>
        <dbReference type="Rhea" id="RHEA:12540"/>
        <dbReference type="Rhea" id="RHEA-COMP:9657"/>
        <dbReference type="Rhea" id="RHEA-COMP:9923"/>
        <dbReference type="ChEBI" id="CHEBI:30616"/>
        <dbReference type="ChEBI" id="CHEBI:33019"/>
        <dbReference type="ChEBI" id="CHEBI:57972"/>
        <dbReference type="ChEBI" id="CHEBI:78442"/>
        <dbReference type="ChEBI" id="CHEBI:78497"/>
        <dbReference type="ChEBI" id="CHEBI:456215"/>
        <dbReference type="EC" id="6.1.1.7"/>
    </reaction>
</comment>
<comment type="cofactor">
    <cofactor evidence="1">
        <name>Zn(2+)</name>
        <dbReference type="ChEBI" id="CHEBI:29105"/>
    </cofactor>
    <text evidence="1">Binds 1 zinc ion per subunit.</text>
</comment>
<comment type="subcellular location">
    <subcellularLocation>
        <location evidence="1">Cytoplasm</location>
    </subcellularLocation>
</comment>
<comment type="domain">
    <text evidence="1">Consists of three domains; the N-terminal catalytic domain, the editing domain and the C-terminal C-Ala domain. The editing domain removes incorrectly charged amino acids, while the C-Ala domain, along with tRNA(Ala), serves as a bridge to cooperatively bring together the editing and aminoacylation centers thus stimulating deacylation of misacylated tRNAs.</text>
</comment>
<comment type="similarity">
    <text evidence="1">Belongs to the class-II aminoacyl-tRNA synthetase family.</text>
</comment>
<feature type="chain" id="PRO_0000347544" description="Alanine--tRNA ligase">
    <location>
        <begin position="1"/>
        <end position="842"/>
    </location>
</feature>
<feature type="binding site" evidence="1">
    <location>
        <position position="549"/>
    </location>
    <ligand>
        <name>Zn(2+)</name>
        <dbReference type="ChEBI" id="CHEBI:29105"/>
    </ligand>
</feature>
<feature type="binding site" evidence="1">
    <location>
        <position position="553"/>
    </location>
    <ligand>
        <name>Zn(2+)</name>
        <dbReference type="ChEBI" id="CHEBI:29105"/>
    </ligand>
</feature>
<feature type="binding site" evidence="1">
    <location>
        <position position="650"/>
    </location>
    <ligand>
        <name>Zn(2+)</name>
        <dbReference type="ChEBI" id="CHEBI:29105"/>
    </ligand>
</feature>
<feature type="binding site" evidence="1">
    <location>
        <position position="654"/>
    </location>
    <ligand>
        <name>Zn(2+)</name>
        <dbReference type="ChEBI" id="CHEBI:29105"/>
    </ligand>
</feature>
<keyword id="KW-0030">Aminoacyl-tRNA synthetase</keyword>
<keyword id="KW-0067">ATP-binding</keyword>
<keyword id="KW-0963">Cytoplasm</keyword>
<keyword id="KW-0436">Ligase</keyword>
<keyword id="KW-0479">Metal-binding</keyword>
<keyword id="KW-0547">Nucleotide-binding</keyword>
<keyword id="KW-0648">Protein biosynthesis</keyword>
<keyword id="KW-0694">RNA-binding</keyword>
<keyword id="KW-0820">tRNA-binding</keyword>
<keyword id="KW-0862">Zinc</keyword>
<name>SYA_CAMJ8</name>
<reference key="1">
    <citation type="journal article" date="2007" name="J. Bacteriol.">
        <title>The complete genome sequence of Campylobacter jejuni strain 81116 (NCTC11828).</title>
        <authorList>
            <person name="Pearson B.M."/>
            <person name="Gaskin D.J.H."/>
            <person name="Segers R.P.A.M."/>
            <person name="Wells J.M."/>
            <person name="Nuijten P.J.M."/>
            <person name="van Vliet A.H.M."/>
        </authorList>
    </citation>
    <scope>NUCLEOTIDE SEQUENCE [LARGE SCALE GENOMIC DNA]</scope>
    <source>
        <strain>81116 / NCTC 11828</strain>
    </source>
</reference>
<accession>A8FKT2</accession>
<proteinExistence type="inferred from homology"/>
<organism>
    <name type="scientific">Campylobacter jejuni subsp. jejuni serotype O:6 (strain 81116 / NCTC 11828)</name>
    <dbReference type="NCBI Taxonomy" id="407148"/>
    <lineage>
        <taxon>Bacteria</taxon>
        <taxon>Pseudomonadati</taxon>
        <taxon>Campylobacterota</taxon>
        <taxon>Epsilonproteobacteria</taxon>
        <taxon>Campylobacterales</taxon>
        <taxon>Campylobacteraceae</taxon>
        <taxon>Campylobacter</taxon>
    </lineage>
</organism>
<gene>
    <name evidence="1" type="primary">alaS</name>
    <name type="ordered locus">C8J_0470</name>
</gene>
<protein>
    <recommendedName>
        <fullName evidence="1">Alanine--tRNA ligase</fullName>
        <ecNumber evidence="1">6.1.1.7</ecNumber>
    </recommendedName>
    <alternativeName>
        <fullName evidence="1">Alanyl-tRNA synthetase</fullName>
        <shortName evidence="1">AlaRS</shortName>
    </alternativeName>
</protein>
<evidence type="ECO:0000255" key="1">
    <source>
        <dbReference type="HAMAP-Rule" id="MF_00036"/>
    </source>
</evidence>
<dbReference type="EC" id="6.1.1.7" evidence="1"/>
<dbReference type="EMBL" id="CP000814">
    <property type="protein sequence ID" value="ABV52069.1"/>
    <property type="molecule type" value="Genomic_DNA"/>
</dbReference>
<dbReference type="RefSeq" id="WP_002866402.1">
    <property type="nucleotide sequence ID" value="NC_009839.1"/>
</dbReference>
<dbReference type="SMR" id="A8FKT2"/>
<dbReference type="KEGG" id="cju:C8J_0470"/>
<dbReference type="HOGENOM" id="CLU_004485_1_1_7"/>
<dbReference type="GO" id="GO:0005829">
    <property type="term" value="C:cytosol"/>
    <property type="evidence" value="ECO:0007669"/>
    <property type="project" value="TreeGrafter"/>
</dbReference>
<dbReference type="GO" id="GO:0004813">
    <property type="term" value="F:alanine-tRNA ligase activity"/>
    <property type="evidence" value="ECO:0007669"/>
    <property type="project" value="UniProtKB-UniRule"/>
</dbReference>
<dbReference type="GO" id="GO:0002161">
    <property type="term" value="F:aminoacyl-tRNA deacylase activity"/>
    <property type="evidence" value="ECO:0007669"/>
    <property type="project" value="TreeGrafter"/>
</dbReference>
<dbReference type="GO" id="GO:0005524">
    <property type="term" value="F:ATP binding"/>
    <property type="evidence" value="ECO:0007669"/>
    <property type="project" value="UniProtKB-UniRule"/>
</dbReference>
<dbReference type="GO" id="GO:0000049">
    <property type="term" value="F:tRNA binding"/>
    <property type="evidence" value="ECO:0007669"/>
    <property type="project" value="UniProtKB-KW"/>
</dbReference>
<dbReference type="GO" id="GO:0008270">
    <property type="term" value="F:zinc ion binding"/>
    <property type="evidence" value="ECO:0007669"/>
    <property type="project" value="UniProtKB-UniRule"/>
</dbReference>
<dbReference type="GO" id="GO:0006419">
    <property type="term" value="P:alanyl-tRNA aminoacylation"/>
    <property type="evidence" value="ECO:0007669"/>
    <property type="project" value="UniProtKB-UniRule"/>
</dbReference>
<dbReference type="GO" id="GO:0045892">
    <property type="term" value="P:negative regulation of DNA-templated transcription"/>
    <property type="evidence" value="ECO:0007669"/>
    <property type="project" value="TreeGrafter"/>
</dbReference>
<dbReference type="CDD" id="cd00673">
    <property type="entry name" value="AlaRS_core"/>
    <property type="match status" value="1"/>
</dbReference>
<dbReference type="FunFam" id="3.10.310.40:FF:000001">
    <property type="entry name" value="Alanine--tRNA ligase"/>
    <property type="match status" value="1"/>
</dbReference>
<dbReference type="FunFam" id="3.30.54.20:FF:000001">
    <property type="entry name" value="Alanine--tRNA ligase"/>
    <property type="match status" value="1"/>
</dbReference>
<dbReference type="FunFam" id="3.30.930.10:FF:000004">
    <property type="entry name" value="Alanine--tRNA ligase"/>
    <property type="match status" value="1"/>
</dbReference>
<dbReference type="FunFam" id="3.30.980.10:FF:000004">
    <property type="entry name" value="Alanine--tRNA ligase, cytoplasmic"/>
    <property type="match status" value="1"/>
</dbReference>
<dbReference type="Gene3D" id="2.40.30.130">
    <property type="match status" value="1"/>
</dbReference>
<dbReference type="Gene3D" id="3.10.310.40">
    <property type="match status" value="1"/>
</dbReference>
<dbReference type="Gene3D" id="3.30.54.20">
    <property type="match status" value="1"/>
</dbReference>
<dbReference type="Gene3D" id="3.30.930.10">
    <property type="entry name" value="Bira Bifunctional Protein, Domain 2"/>
    <property type="match status" value="1"/>
</dbReference>
<dbReference type="Gene3D" id="3.30.980.10">
    <property type="entry name" value="Threonyl-trna Synthetase, Chain A, domain 2"/>
    <property type="match status" value="1"/>
</dbReference>
<dbReference type="HAMAP" id="MF_00036_B">
    <property type="entry name" value="Ala_tRNA_synth_B"/>
    <property type="match status" value="1"/>
</dbReference>
<dbReference type="InterPro" id="IPR045864">
    <property type="entry name" value="aa-tRNA-synth_II/BPL/LPL"/>
</dbReference>
<dbReference type="InterPro" id="IPR002318">
    <property type="entry name" value="Ala-tRNA-lgiase_IIc"/>
</dbReference>
<dbReference type="InterPro" id="IPR018162">
    <property type="entry name" value="Ala-tRNA-ligase_IIc_anticod-bd"/>
</dbReference>
<dbReference type="InterPro" id="IPR018165">
    <property type="entry name" value="Ala-tRNA-synth_IIc_core"/>
</dbReference>
<dbReference type="InterPro" id="IPR018164">
    <property type="entry name" value="Ala-tRNA-synth_IIc_N"/>
</dbReference>
<dbReference type="InterPro" id="IPR050058">
    <property type="entry name" value="Ala-tRNA_ligase"/>
</dbReference>
<dbReference type="InterPro" id="IPR023033">
    <property type="entry name" value="Ala_tRNA_ligase_euk/bac"/>
</dbReference>
<dbReference type="InterPro" id="IPR003156">
    <property type="entry name" value="DHHA1_dom"/>
</dbReference>
<dbReference type="InterPro" id="IPR018163">
    <property type="entry name" value="Thr/Ala-tRNA-synth_IIc_edit"/>
</dbReference>
<dbReference type="InterPro" id="IPR009000">
    <property type="entry name" value="Transl_B-barrel_sf"/>
</dbReference>
<dbReference type="InterPro" id="IPR012947">
    <property type="entry name" value="tRNA_SAD"/>
</dbReference>
<dbReference type="NCBIfam" id="TIGR00344">
    <property type="entry name" value="alaS"/>
    <property type="match status" value="1"/>
</dbReference>
<dbReference type="PANTHER" id="PTHR11777:SF9">
    <property type="entry name" value="ALANINE--TRNA LIGASE, CYTOPLASMIC"/>
    <property type="match status" value="1"/>
</dbReference>
<dbReference type="PANTHER" id="PTHR11777">
    <property type="entry name" value="ALANYL-TRNA SYNTHETASE"/>
    <property type="match status" value="1"/>
</dbReference>
<dbReference type="Pfam" id="PF02272">
    <property type="entry name" value="DHHA1"/>
    <property type="match status" value="1"/>
</dbReference>
<dbReference type="Pfam" id="PF01411">
    <property type="entry name" value="tRNA-synt_2c"/>
    <property type="match status" value="1"/>
</dbReference>
<dbReference type="Pfam" id="PF07973">
    <property type="entry name" value="tRNA_SAD"/>
    <property type="match status" value="1"/>
</dbReference>
<dbReference type="PRINTS" id="PR00980">
    <property type="entry name" value="TRNASYNTHALA"/>
</dbReference>
<dbReference type="SMART" id="SM00863">
    <property type="entry name" value="tRNA_SAD"/>
    <property type="match status" value="1"/>
</dbReference>
<dbReference type="SUPFAM" id="SSF55681">
    <property type="entry name" value="Class II aaRS and biotin synthetases"/>
    <property type="match status" value="1"/>
</dbReference>
<dbReference type="SUPFAM" id="SSF101353">
    <property type="entry name" value="Putative anticodon-binding domain of alanyl-tRNA synthetase (AlaRS)"/>
    <property type="match status" value="1"/>
</dbReference>
<dbReference type="SUPFAM" id="SSF55186">
    <property type="entry name" value="ThrRS/AlaRS common domain"/>
    <property type="match status" value="1"/>
</dbReference>
<dbReference type="SUPFAM" id="SSF50447">
    <property type="entry name" value="Translation proteins"/>
    <property type="match status" value="1"/>
</dbReference>
<dbReference type="PROSITE" id="PS50860">
    <property type="entry name" value="AA_TRNA_LIGASE_II_ALA"/>
    <property type="match status" value="1"/>
</dbReference>